<comment type="function">
    <text evidence="5 6 7 8 9">Controls cuticle development and morphogenesis, by promoting cutin and suberin monomers loading (PubMed:16415209, PubMed:17257167, PubMed:18952782, PubMed:26990896). Involved in the regulation of abscissic acid (ABA) biosynthesis in response to osmotic stress. Plays an important role in osmotic stress and drought resistance (PubMed:21610183). Required to ensure a reduced permeability of aerial tissue, thus preventing transpiration (PubMed:18952782, PubMed:21610183, PubMed:26990896). Regulates lateral root hair development (PubMed:18952782).</text>
</comment>
<comment type="function">
    <text evidence="6">Required for infection by the pathogenic necrotrophic fungus Botrytis cinerea, probably by regulating structural traits of the cuticle.</text>
</comment>
<comment type="subcellular location">
    <subcellularLocation>
        <location evidence="2">Cell membrane</location>
        <topology evidence="2">Lipid-anchor</topology>
    </subcellularLocation>
    <subcellularLocation>
        <location evidence="5">Secreted</location>
        <location evidence="5">Cell wall</location>
    </subcellularLocation>
    <text evidence="5">Polar localization with accumulation in epidermis outermost cell wall.</text>
</comment>
<comment type="tissue specificity">
    <text evidence="4 5">Expressed exclusively in protodermal and epidermal cells of all organs, especially on adaxial sides.</text>
</comment>
<comment type="developmental stage">
    <text evidence="5 9">In germinating seed, present in the embryo epidermis, in cotyledons and in leaf primordia of the first true leaves. In cotyledons, mostly expressed in guard cells and vasculature. Observed in developing leaf buds, including the nodes and buds of cauline leaves (PubMed:26990896). In flowers, expressed in all organs, levels decreasing during flower aging. In the pistil, accumulates mostly in the abaxial epidermal cells, and, to a lower extent, in the septum and the inner ovary wall (PubMed:16415209, PubMed:26990896). Also expressed in the stigmatic papillae and vasculature of the sepals, petals and stamens. Accumulates in embryo during seed dehydration. Present in the central cylinder of the roots. In addition, detected in suberized tissues, such as siliques abscission zone and seed chalaza/micropyle region (PubMed:26990896).</text>
</comment>
<comment type="induction">
    <text evidence="8">Induced by osmotic stress and abscissic acid (ABA).</text>
</comment>
<comment type="disruption phenotype">
    <text evidence="5 6 7 8 9">Defects characteristic of the loss of cuticle structure associated with an enhanced accumulation of cell wall-bound lipids and epicuticular waxes (PubMed:16415209, PubMed:17257167, PubMed:18952782, PubMed:26990896). Reduced expression of abscissic acid (ABA) biosynthesis genes (e.g. NCED3) in response to osmotic stress (e.g. polyethylene glycol) leading to reduced levels of ABA and high sensitivity to osmotic stress and drought, especially during seed germination and early seedling development (PubMed:21610183). Increased aerial tissue permeability to the toluidine blue (TB) dye (PubMed:18952782). Enhanced transpiration. Strong decrease in total cutin monomer load in young leaves and flowers. Reduced levels of suberin in roots (PubMed:26990896). Pleiotropic effect on growth, viability, and cell differentiation, leading to abnormalities such as long root hairs, excessively branched roots, shrinking of epidermal cells, and flattened/misshapen trichomes (PubMed:16415209). Strong increase of total lateral root lengths (TOT) on mild osmotic stress conditions (PubMed:18952782). Total immunity to the pathogenic necrotrophic fungus Botrytis cinerea accompanied by the release of a fungitoxic activity and increased expression of defense genes (PubMed:17257167).</text>
</comment>
<comment type="sequence caution" evidence="13">
    <conflict type="erroneous gene model prediction">
        <sequence resource="EMBL-CDS" id="AAF19684"/>
    </conflict>
</comment>
<name>BDG1_ARATH</name>
<dbReference type="EC" id="3.1.1.-" evidence="13"/>
<dbReference type="EMBL" id="AJ781319">
    <property type="protein sequence ID" value="CAH03662.1"/>
    <property type="molecule type" value="Genomic_DNA"/>
</dbReference>
<dbReference type="EMBL" id="AC009519">
    <property type="protein sequence ID" value="AAF19684.1"/>
    <property type="status" value="ALT_SEQ"/>
    <property type="molecule type" value="Genomic_DNA"/>
</dbReference>
<dbReference type="EMBL" id="CP002684">
    <property type="protein sequence ID" value="AEE34272.1"/>
    <property type="molecule type" value="Genomic_DNA"/>
</dbReference>
<dbReference type="EMBL" id="AK119137">
    <property type="protein sequence ID" value="BAC43707.1"/>
    <property type="molecule type" value="mRNA"/>
</dbReference>
<dbReference type="EMBL" id="BT005382">
    <property type="protein sequence ID" value="AAO63446.1"/>
    <property type="molecule type" value="mRNA"/>
</dbReference>
<dbReference type="EMBL" id="AY084590">
    <property type="protein sequence ID" value="AAM61155.1"/>
    <property type="molecule type" value="mRNA"/>
</dbReference>
<dbReference type="RefSeq" id="NP_564837.1">
    <property type="nucleotide sequence ID" value="NM_105142.4"/>
</dbReference>
<dbReference type="SMR" id="Q8LFX7"/>
<dbReference type="FunCoup" id="Q8LFX7">
    <property type="interactions" value="7"/>
</dbReference>
<dbReference type="STRING" id="3702.Q8LFX7"/>
<dbReference type="ESTHER" id="arath-Q9SGU8">
    <property type="family name" value="Bodyguard"/>
</dbReference>
<dbReference type="MEROPS" id="S33.A27"/>
<dbReference type="PaxDb" id="3702-AT1G64670.1"/>
<dbReference type="ProteomicsDB" id="240721"/>
<dbReference type="EnsemblPlants" id="AT1G64670.1">
    <property type="protein sequence ID" value="AT1G64670.1"/>
    <property type="gene ID" value="AT1G64670"/>
</dbReference>
<dbReference type="GeneID" id="842775"/>
<dbReference type="Gramene" id="AT1G64670.1">
    <property type="protein sequence ID" value="AT1G64670.1"/>
    <property type="gene ID" value="AT1G64670"/>
</dbReference>
<dbReference type="KEGG" id="ath:AT1G64670"/>
<dbReference type="Araport" id="AT1G64670"/>
<dbReference type="TAIR" id="AT1G64670">
    <property type="gene designation" value="BDG1"/>
</dbReference>
<dbReference type="eggNOG" id="KOG1454">
    <property type="taxonomic scope" value="Eukaryota"/>
</dbReference>
<dbReference type="HOGENOM" id="CLU_051935_0_0_1"/>
<dbReference type="InParanoid" id="Q8LFX7"/>
<dbReference type="OMA" id="RVINEVM"/>
<dbReference type="PRO" id="PR:Q8LFX7"/>
<dbReference type="Proteomes" id="UP000006548">
    <property type="component" value="Chromosome 1"/>
</dbReference>
<dbReference type="ExpressionAtlas" id="Q8LFX7">
    <property type="expression patterns" value="baseline and differential"/>
</dbReference>
<dbReference type="GO" id="GO:0005576">
    <property type="term" value="C:extracellular region"/>
    <property type="evidence" value="ECO:0007669"/>
    <property type="project" value="UniProtKB-KW"/>
</dbReference>
<dbReference type="GO" id="GO:0009505">
    <property type="term" value="C:plant-type cell wall"/>
    <property type="evidence" value="ECO:0000314"/>
    <property type="project" value="TAIR"/>
</dbReference>
<dbReference type="GO" id="GO:0005886">
    <property type="term" value="C:plasma membrane"/>
    <property type="evidence" value="ECO:0007669"/>
    <property type="project" value="UniProtKB-SubCell"/>
</dbReference>
<dbReference type="GO" id="GO:0016787">
    <property type="term" value="F:hydrolase activity"/>
    <property type="evidence" value="ECO:0007669"/>
    <property type="project" value="UniProtKB-KW"/>
</dbReference>
<dbReference type="GO" id="GO:0009688">
    <property type="term" value="P:abscisic acid biosynthetic process"/>
    <property type="evidence" value="ECO:0007669"/>
    <property type="project" value="UniProtKB-KW"/>
</dbReference>
<dbReference type="GO" id="GO:0071555">
    <property type="term" value="P:cell wall organization"/>
    <property type="evidence" value="ECO:0007669"/>
    <property type="project" value="UniProtKB-KW"/>
</dbReference>
<dbReference type="GO" id="GO:0042335">
    <property type="term" value="P:cuticle development"/>
    <property type="evidence" value="ECO:0000315"/>
    <property type="project" value="UniProtKB"/>
</dbReference>
<dbReference type="GO" id="GO:0010143">
    <property type="term" value="P:cutin biosynthetic process"/>
    <property type="evidence" value="ECO:0000315"/>
    <property type="project" value="TAIR"/>
</dbReference>
<dbReference type="GO" id="GO:0050832">
    <property type="term" value="P:defense response to fungus"/>
    <property type="evidence" value="ECO:0000315"/>
    <property type="project" value="UniProtKB"/>
</dbReference>
<dbReference type="GO" id="GO:0048527">
    <property type="term" value="P:lateral root development"/>
    <property type="evidence" value="ECO:0000315"/>
    <property type="project" value="UniProtKB"/>
</dbReference>
<dbReference type="GO" id="GO:1901959">
    <property type="term" value="P:positive regulation of cutin biosynthetic process"/>
    <property type="evidence" value="ECO:0000315"/>
    <property type="project" value="UniProtKB"/>
</dbReference>
<dbReference type="GO" id="GO:1902584">
    <property type="term" value="P:positive regulation of response to water deprivation"/>
    <property type="evidence" value="ECO:0000315"/>
    <property type="project" value="UniProtKB"/>
</dbReference>
<dbReference type="GO" id="GO:0010115">
    <property type="term" value="P:regulation of abscisic acid biosynthetic process"/>
    <property type="evidence" value="ECO:0000315"/>
    <property type="project" value="TAIR"/>
</dbReference>
<dbReference type="GO" id="GO:0009737">
    <property type="term" value="P:response to abscisic acid"/>
    <property type="evidence" value="ECO:0000270"/>
    <property type="project" value="UniProtKB"/>
</dbReference>
<dbReference type="GO" id="GO:0006970">
    <property type="term" value="P:response to osmotic stress"/>
    <property type="evidence" value="ECO:0000315"/>
    <property type="project" value="TAIR"/>
</dbReference>
<dbReference type="GO" id="GO:0010345">
    <property type="term" value="P:suberin biosynthetic process"/>
    <property type="evidence" value="ECO:0000315"/>
    <property type="project" value="UniProtKB"/>
</dbReference>
<dbReference type="GO" id="GO:0010148">
    <property type="term" value="P:transpiration"/>
    <property type="evidence" value="ECO:0000315"/>
    <property type="project" value="UniProtKB"/>
</dbReference>
<dbReference type="FunFam" id="3.40.50.1820:FF:000318">
    <property type="entry name" value="Probable lysophospholipase BODYGUARD 1"/>
    <property type="match status" value="1"/>
</dbReference>
<dbReference type="Gene3D" id="3.40.50.1820">
    <property type="entry name" value="alpha/beta hydrolase"/>
    <property type="match status" value="1"/>
</dbReference>
<dbReference type="InterPro" id="IPR000073">
    <property type="entry name" value="AB_hydrolase_1"/>
</dbReference>
<dbReference type="InterPro" id="IPR029058">
    <property type="entry name" value="AB_hydrolase_fold"/>
</dbReference>
<dbReference type="PANTHER" id="PTHR43689">
    <property type="entry name" value="HYDROLASE"/>
    <property type="match status" value="1"/>
</dbReference>
<dbReference type="PANTHER" id="PTHR43689:SF25">
    <property type="entry name" value="LYSOPHOSPHOLIPASE BODYGUARD 1-RELATED"/>
    <property type="match status" value="1"/>
</dbReference>
<dbReference type="Pfam" id="PF00561">
    <property type="entry name" value="Abhydrolase_1"/>
    <property type="match status" value="1"/>
</dbReference>
<dbReference type="PRINTS" id="PR00111">
    <property type="entry name" value="ABHYDROLASE"/>
</dbReference>
<dbReference type="SUPFAM" id="SSF53474">
    <property type="entry name" value="alpha/beta-Hydrolases"/>
    <property type="match status" value="1"/>
</dbReference>
<evidence type="ECO:0000250" key="1">
    <source>
        <dbReference type="UniProtKB" id="P04180"/>
    </source>
</evidence>
<evidence type="ECO:0000255" key="2"/>
<evidence type="ECO:0000255" key="3">
    <source>
        <dbReference type="PROSITE-ProRule" id="PRU00303"/>
    </source>
</evidence>
<evidence type="ECO:0000269" key="4">
    <source>
    </source>
</evidence>
<evidence type="ECO:0000269" key="5">
    <source>
    </source>
</evidence>
<evidence type="ECO:0000269" key="6">
    <source>
    </source>
</evidence>
<evidence type="ECO:0000269" key="7">
    <source>
    </source>
</evidence>
<evidence type="ECO:0000269" key="8">
    <source>
    </source>
</evidence>
<evidence type="ECO:0000269" key="9">
    <source>
    </source>
</evidence>
<evidence type="ECO:0000303" key="10">
    <source>
    </source>
</evidence>
<evidence type="ECO:0000303" key="11">
    <source>
    </source>
</evidence>
<evidence type="ECO:0000303" key="12">
    <source>
    </source>
</evidence>
<evidence type="ECO:0000305" key="13"/>
<evidence type="ECO:0000312" key="14">
    <source>
        <dbReference type="Araport" id="AT1G64670"/>
    </source>
</evidence>
<evidence type="ECO:0000312" key="15">
    <source>
        <dbReference type="EMBL" id="AAF19684.1"/>
    </source>
</evidence>
<keyword id="KW-0937">Abscisic acid biosynthesis</keyword>
<keyword id="KW-1003">Cell membrane</keyword>
<keyword id="KW-0134">Cell wall</keyword>
<keyword id="KW-0961">Cell wall biogenesis/degradation</keyword>
<keyword id="KW-0378">Hydrolase</keyword>
<keyword id="KW-0449">Lipoprotein</keyword>
<keyword id="KW-0472">Membrane</keyword>
<keyword id="KW-0564">Palmitate</keyword>
<keyword id="KW-0611">Plant defense</keyword>
<keyword id="KW-1185">Reference proteome</keyword>
<keyword id="KW-0964">Secreted</keyword>
<keyword id="KW-0732">Signal</keyword>
<organism>
    <name type="scientific">Arabidopsis thaliana</name>
    <name type="common">Mouse-ear cress</name>
    <dbReference type="NCBI Taxonomy" id="3702"/>
    <lineage>
        <taxon>Eukaryota</taxon>
        <taxon>Viridiplantae</taxon>
        <taxon>Streptophyta</taxon>
        <taxon>Embryophyta</taxon>
        <taxon>Tracheophyta</taxon>
        <taxon>Spermatophyta</taxon>
        <taxon>Magnoliopsida</taxon>
        <taxon>eudicotyledons</taxon>
        <taxon>Gunneridae</taxon>
        <taxon>Pentapetalae</taxon>
        <taxon>rosids</taxon>
        <taxon>malvids</taxon>
        <taxon>Brassicales</taxon>
        <taxon>Brassicaceae</taxon>
        <taxon>Camelineae</taxon>
        <taxon>Arabidopsis</taxon>
    </lineage>
</organism>
<proteinExistence type="evidence at transcript level"/>
<gene>
    <name evidence="10" type="primary">BDG1</name>
    <name evidence="10" type="synonym">BDG</name>
    <name evidence="12" type="synonym">CB5</name>
    <name evidence="11" type="synonym">CED1</name>
    <name evidence="14" type="ordered locus">At1g64670</name>
    <name evidence="15" type="ORF">F1N19.24</name>
</gene>
<protein>
    <recommendedName>
        <fullName evidence="10">Probable lysophospholipase BODYGUARD 1</fullName>
        <shortName evidence="10">AtBDG1</shortName>
        <ecNumber evidence="13">3.1.1.-</ecNumber>
    </recommendedName>
    <alternativeName>
        <fullName evidence="11">Protein 9-cis epoxycarotenoid dioxygenase defective 1</fullName>
    </alternativeName>
    <alternativeName>
        <fullName evidence="12">Protein COOL BREATH 5</fullName>
    </alternativeName>
</protein>
<feature type="signal peptide" evidence="2">
    <location>
        <begin position="1"/>
        <end position="45"/>
    </location>
</feature>
<feature type="chain" id="PRO_0000437268" description="Probable lysophospholipase BODYGUARD 1">
    <location>
        <begin position="46"/>
        <end position="469"/>
    </location>
</feature>
<feature type="domain" description="AB hydrolase-1" evidence="2">
    <location>
        <begin position="185"/>
        <end position="439"/>
    </location>
</feature>
<feature type="active site" evidence="2">
    <location>
        <position position="189"/>
    </location>
</feature>
<feature type="active site" description="Nucleophile" evidence="1">
    <location>
        <position position="263"/>
    </location>
</feature>
<feature type="active site" description="Charge relay system" evidence="1">
    <location>
        <position position="410"/>
    </location>
</feature>
<feature type="active site" description="Charge relay system" evidence="1">
    <location>
        <position position="438"/>
    </location>
</feature>
<feature type="lipid moiety-binding region" description="N-palmitoyl cysteine" evidence="3">
    <location>
        <position position="46"/>
    </location>
</feature>
<sequence>MGFSRSLNRTVGVFVFFILDIVDFLLCFTYKTLDFFFESEWKPCYCCPPPEAKPISAGGNRGGKMIVSERSGDYSKVVSLTRTKIYLDEISDTLYSRPSLLTKLTKLVKCFKKDVVKCCDESKKRSPSTKKTLLTVNSTVVEKLQRTPRWSDCHCTFCTSWLSSSNQSLFVNVQQPTDNKAQENVVFIHGFLSSSTFWTETLFPNFSDSAKSNYRFLAVDLLGYGKSPKPNDSLYTLKEHLEMIERSVISQFRLKTFHLVAHSLGCILALALAVKHPGAIKSLTLLAPPYYSVPKGVQGTQYVMRRLAPKEVWPPMAFGASVASWYEHISRTVSLVLCKNHHLLEFLTRLLTRNRMRTYLIEGFLCHTHNASWHTLHNIIFGSGSKVEAYLDHVRDNVDCEVAVFHGGRDELIPVECSYGVKRKVPRARIHVVPDKDHITIVVGRQKEFARELELIWRRSTTPQLHSIN</sequence>
<reference key="1">
    <citation type="journal article" date="2006" name="Plant Cell">
        <title>The epidermis-specific extracellular BODYGUARD controls cuticle development and morphogenesis in Arabidopsis.</title>
        <authorList>
            <person name="Kurdyukov S."/>
            <person name="Faust A."/>
            <person name="Nawrath C."/>
            <person name="Baer S."/>
            <person name="Voisin D."/>
            <person name="Efremova N."/>
            <person name="Franke R."/>
            <person name="Schreiber L."/>
            <person name="Saedler H."/>
            <person name="Metraux J.-P."/>
            <person name="Yephremov A."/>
        </authorList>
    </citation>
    <scope>NUCLEOTIDE SEQUENCE [GENOMIC DNA]</scope>
    <scope>FUNCTION</scope>
    <scope>DISRUPTION PHENOTYPE</scope>
    <scope>TISSUE SPECIFICITY</scope>
    <scope>SUBCELLULAR LOCATION</scope>
    <scope>DEVELOPMENTAL STAGE</scope>
    <scope>GENE FAMILY</scope>
    <scope>NOMENCLATURE</scope>
    <source>
        <strain>cv. Columbia</strain>
    </source>
</reference>
<reference key="2">
    <citation type="journal article" date="2000" name="Nature">
        <title>Sequence and analysis of chromosome 1 of the plant Arabidopsis thaliana.</title>
        <authorList>
            <person name="Theologis A."/>
            <person name="Ecker J.R."/>
            <person name="Palm C.J."/>
            <person name="Federspiel N.A."/>
            <person name="Kaul S."/>
            <person name="White O."/>
            <person name="Alonso J."/>
            <person name="Altafi H."/>
            <person name="Araujo R."/>
            <person name="Bowman C.L."/>
            <person name="Brooks S.Y."/>
            <person name="Buehler E."/>
            <person name="Chan A."/>
            <person name="Chao Q."/>
            <person name="Chen H."/>
            <person name="Cheuk R.F."/>
            <person name="Chin C.W."/>
            <person name="Chung M.K."/>
            <person name="Conn L."/>
            <person name="Conway A.B."/>
            <person name="Conway A.R."/>
            <person name="Creasy T.H."/>
            <person name="Dewar K."/>
            <person name="Dunn P."/>
            <person name="Etgu P."/>
            <person name="Feldblyum T.V."/>
            <person name="Feng J.-D."/>
            <person name="Fong B."/>
            <person name="Fujii C.Y."/>
            <person name="Gill J.E."/>
            <person name="Goldsmith A.D."/>
            <person name="Haas B."/>
            <person name="Hansen N.F."/>
            <person name="Hughes B."/>
            <person name="Huizar L."/>
            <person name="Hunter J.L."/>
            <person name="Jenkins J."/>
            <person name="Johnson-Hopson C."/>
            <person name="Khan S."/>
            <person name="Khaykin E."/>
            <person name="Kim C.J."/>
            <person name="Koo H.L."/>
            <person name="Kremenetskaia I."/>
            <person name="Kurtz D.B."/>
            <person name="Kwan A."/>
            <person name="Lam B."/>
            <person name="Langin-Hooper S."/>
            <person name="Lee A."/>
            <person name="Lee J.M."/>
            <person name="Lenz C.A."/>
            <person name="Li J.H."/>
            <person name="Li Y.-P."/>
            <person name="Lin X."/>
            <person name="Liu S.X."/>
            <person name="Liu Z.A."/>
            <person name="Luros J.S."/>
            <person name="Maiti R."/>
            <person name="Marziali A."/>
            <person name="Militscher J."/>
            <person name="Miranda M."/>
            <person name="Nguyen M."/>
            <person name="Nierman W.C."/>
            <person name="Osborne B.I."/>
            <person name="Pai G."/>
            <person name="Peterson J."/>
            <person name="Pham P.K."/>
            <person name="Rizzo M."/>
            <person name="Rooney T."/>
            <person name="Rowley D."/>
            <person name="Sakano H."/>
            <person name="Salzberg S.L."/>
            <person name="Schwartz J.R."/>
            <person name="Shinn P."/>
            <person name="Southwick A.M."/>
            <person name="Sun H."/>
            <person name="Tallon L.J."/>
            <person name="Tambunga G."/>
            <person name="Toriumi M.J."/>
            <person name="Town C.D."/>
            <person name="Utterback T."/>
            <person name="Van Aken S."/>
            <person name="Vaysberg M."/>
            <person name="Vysotskaia V.S."/>
            <person name="Walker M."/>
            <person name="Wu D."/>
            <person name="Yu G."/>
            <person name="Fraser C.M."/>
            <person name="Venter J.C."/>
            <person name="Davis R.W."/>
        </authorList>
    </citation>
    <scope>NUCLEOTIDE SEQUENCE [LARGE SCALE GENOMIC DNA]</scope>
    <source>
        <strain>cv. Columbia</strain>
    </source>
</reference>
<reference key="3">
    <citation type="journal article" date="2017" name="Plant J.">
        <title>Araport11: a complete reannotation of the Arabidopsis thaliana reference genome.</title>
        <authorList>
            <person name="Cheng C.Y."/>
            <person name="Krishnakumar V."/>
            <person name="Chan A.P."/>
            <person name="Thibaud-Nissen F."/>
            <person name="Schobel S."/>
            <person name="Town C.D."/>
        </authorList>
    </citation>
    <scope>GENOME REANNOTATION</scope>
    <source>
        <strain>cv. Columbia</strain>
    </source>
</reference>
<reference key="4">
    <citation type="journal article" date="2002" name="Science">
        <title>Functional annotation of a full-length Arabidopsis cDNA collection.</title>
        <authorList>
            <person name="Seki M."/>
            <person name="Narusaka M."/>
            <person name="Kamiya A."/>
            <person name="Ishida J."/>
            <person name="Satou M."/>
            <person name="Sakurai T."/>
            <person name="Nakajima M."/>
            <person name="Enju A."/>
            <person name="Akiyama K."/>
            <person name="Oono Y."/>
            <person name="Muramatsu M."/>
            <person name="Hayashizaki Y."/>
            <person name="Kawai J."/>
            <person name="Carninci P."/>
            <person name="Itoh M."/>
            <person name="Ishii Y."/>
            <person name="Arakawa T."/>
            <person name="Shibata K."/>
            <person name="Shinagawa A."/>
            <person name="Shinozaki K."/>
        </authorList>
    </citation>
    <scope>NUCLEOTIDE SEQUENCE [LARGE SCALE MRNA]</scope>
    <source>
        <strain>cv. Columbia</strain>
    </source>
</reference>
<reference key="5">
    <citation type="journal article" date="2003" name="Science">
        <title>Empirical analysis of transcriptional activity in the Arabidopsis genome.</title>
        <authorList>
            <person name="Yamada K."/>
            <person name="Lim J."/>
            <person name="Dale J.M."/>
            <person name="Chen H."/>
            <person name="Shinn P."/>
            <person name="Palm C.J."/>
            <person name="Southwick A.M."/>
            <person name="Wu H.C."/>
            <person name="Kim C.J."/>
            <person name="Nguyen M."/>
            <person name="Pham P.K."/>
            <person name="Cheuk R.F."/>
            <person name="Karlin-Newmann G."/>
            <person name="Liu S.X."/>
            <person name="Lam B."/>
            <person name="Sakano H."/>
            <person name="Wu T."/>
            <person name="Yu G."/>
            <person name="Miranda M."/>
            <person name="Quach H.L."/>
            <person name="Tripp M."/>
            <person name="Chang C.H."/>
            <person name="Lee J.M."/>
            <person name="Toriumi M.J."/>
            <person name="Chan M.M."/>
            <person name="Tang C.C."/>
            <person name="Onodera C.S."/>
            <person name="Deng J.M."/>
            <person name="Akiyama K."/>
            <person name="Ansari Y."/>
            <person name="Arakawa T."/>
            <person name="Banh J."/>
            <person name="Banno F."/>
            <person name="Bowser L."/>
            <person name="Brooks S.Y."/>
            <person name="Carninci P."/>
            <person name="Chao Q."/>
            <person name="Choy N."/>
            <person name="Enju A."/>
            <person name="Goldsmith A.D."/>
            <person name="Gurjal M."/>
            <person name="Hansen N.F."/>
            <person name="Hayashizaki Y."/>
            <person name="Johnson-Hopson C."/>
            <person name="Hsuan V.W."/>
            <person name="Iida K."/>
            <person name="Karnes M."/>
            <person name="Khan S."/>
            <person name="Koesema E."/>
            <person name="Ishida J."/>
            <person name="Jiang P.X."/>
            <person name="Jones T."/>
            <person name="Kawai J."/>
            <person name="Kamiya A."/>
            <person name="Meyers C."/>
            <person name="Nakajima M."/>
            <person name="Narusaka M."/>
            <person name="Seki M."/>
            <person name="Sakurai T."/>
            <person name="Satou M."/>
            <person name="Tamse R."/>
            <person name="Vaysberg M."/>
            <person name="Wallender E.K."/>
            <person name="Wong C."/>
            <person name="Yamamura Y."/>
            <person name="Yuan S."/>
            <person name="Shinozaki K."/>
            <person name="Davis R.W."/>
            <person name="Theologis A."/>
            <person name="Ecker J.R."/>
        </authorList>
    </citation>
    <scope>NUCLEOTIDE SEQUENCE [LARGE SCALE MRNA]</scope>
    <source>
        <strain>cv. Columbia</strain>
    </source>
</reference>
<reference key="6">
    <citation type="submission" date="2002-03" db="EMBL/GenBank/DDBJ databases">
        <title>Full-length cDNA from Arabidopsis thaliana.</title>
        <authorList>
            <person name="Brover V.V."/>
            <person name="Troukhan M.E."/>
            <person name="Alexandrov N.A."/>
            <person name="Lu Y.-P."/>
            <person name="Flavell R.B."/>
            <person name="Feldmann K.A."/>
        </authorList>
    </citation>
    <scope>NUCLEOTIDE SEQUENCE [LARGE SCALE MRNA]</scope>
</reference>
<reference key="7">
    <citation type="journal article" date="2005" name="Plant Physiol.">
        <title>Cuticular lipid composition, surface structure, and gene expression in Arabidopsis stem epidermis.</title>
        <authorList>
            <person name="Suh M.C."/>
            <person name="Samuels A.L."/>
            <person name="Jetter R."/>
            <person name="Kunst L."/>
            <person name="Pollard M."/>
            <person name="Ohlrogge J."/>
            <person name="Beisson F."/>
        </authorList>
    </citation>
    <scope>TISSUE SPECIFICITY</scope>
    <source>
        <strain>cv. Columbia</strain>
    </source>
</reference>
<reference key="8">
    <citation type="journal article" date="2007" name="Plant J.">
        <title>Cuticular defects lead to full immunity to a major plant pathogen.</title>
        <authorList>
            <person name="Chassot C."/>
            <person name="Nawrath C."/>
            <person name="Metraux J.-P."/>
        </authorList>
    </citation>
    <scope>FUNCTION</scope>
    <scope>DISRUPTION PHENOTYPE</scope>
    <source>
        <strain>cv. Columbia</strain>
    </source>
</reference>
<reference key="9">
    <citation type="journal article" date="2008" name="Plant Cell">
        <title>Root system architecture in Arabidopsis grown in culture is regulated by sucrose uptake in the aerial tissues.</title>
        <authorList>
            <person name="Macgregor D.R."/>
            <person name="Deak K.I."/>
            <person name="Ingram P.A."/>
            <person name="Malamy J.E."/>
        </authorList>
    </citation>
    <scope>FUNCTION</scope>
    <scope>DISRUPTION PHENOTYPE</scope>
</reference>
<reference key="10">
    <citation type="journal article" date="2011" name="Plant Cell">
        <title>The plant cuticle is required for osmotic stress regulation of abscisic acid biosynthesis and osmotic stress tolerance in Arabidopsis.</title>
        <authorList>
            <person name="Wang Z.-Y."/>
            <person name="Xiong L."/>
            <person name="Li W."/>
            <person name="Zhu J.-K."/>
            <person name="Zhu J."/>
        </authorList>
    </citation>
    <scope>FUNCTION</scope>
    <scope>DISRUPTION PHENOTYPE</scope>
    <scope>INDUCTION BY OSMOTIC STRESS AND ABSCISSIC ACID</scope>
    <source>
        <strain>cv. Columbia GL1</strain>
    </source>
</reference>
<reference key="11">
    <citation type="journal article" date="2013" name="Arabidopsis Book">
        <title>Acyl-lipid metabolism.</title>
        <authorList>
            <person name="Li-Beisson Y."/>
            <person name="Shorrosh B."/>
            <person name="Beisson F."/>
            <person name="Andersson M.X."/>
            <person name="Arondel V."/>
            <person name="Bates P.D."/>
            <person name="Baud S."/>
            <person name="Bird D."/>
            <person name="Debono A."/>
            <person name="Durrett T.P."/>
            <person name="Franke R.B."/>
            <person name="Graham I.A."/>
            <person name="Katayama K."/>
            <person name="Kelly A.A."/>
            <person name="Larson T."/>
            <person name="Markham J.E."/>
            <person name="Miquel M."/>
            <person name="Molina I."/>
            <person name="Nishida I."/>
            <person name="Rowland O."/>
            <person name="Samuels L."/>
            <person name="Schmid K.M."/>
            <person name="Wada H."/>
            <person name="Welti R."/>
            <person name="Xu C."/>
            <person name="Zallot R."/>
            <person name="Ohlrogge J."/>
        </authorList>
    </citation>
    <scope>REVIEW</scope>
</reference>
<reference key="12">
    <citation type="journal article" date="2016" name="New Phytol.">
        <title>BODYGUARD is required for the biosynthesis of cutin in Arabidopsis.</title>
        <authorList>
            <person name="Jakobson L."/>
            <person name="Lindgren L.O."/>
            <person name="Verdier G."/>
            <person name="Laanemets K."/>
            <person name="Brosche M."/>
            <person name="Beisson F."/>
            <person name="Kollist H."/>
        </authorList>
    </citation>
    <scope>FUNCTION</scope>
    <scope>DISRUPTION PHENOTYPE</scope>
    <scope>DEVELOPMENTAL STAGE</scope>
    <source>
        <strain>cv. Columbia</strain>
    </source>
</reference>
<accession>Q8LFX7</accession>
<accession>Q9SGU8</accession>